<evidence type="ECO:0000255" key="1">
    <source>
        <dbReference type="HAMAP-Rule" id="MF_00435"/>
    </source>
</evidence>
<evidence type="ECO:0000255" key="2">
    <source>
        <dbReference type="PROSITE-ProRule" id="PRU01197"/>
    </source>
</evidence>
<evidence type="ECO:0000255" key="3">
    <source>
        <dbReference type="PROSITE-ProRule" id="PRU01198"/>
    </source>
</evidence>
<name>ILVC_AROAE</name>
<keyword id="KW-0028">Amino-acid biosynthesis</keyword>
<keyword id="KW-0100">Branched-chain amino acid biosynthesis</keyword>
<keyword id="KW-0460">Magnesium</keyword>
<keyword id="KW-0479">Metal-binding</keyword>
<keyword id="KW-0521">NADP</keyword>
<keyword id="KW-0560">Oxidoreductase</keyword>
<keyword id="KW-1185">Reference proteome</keyword>
<comment type="function">
    <text evidence="1">Involved in the biosynthesis of branched-chain amino acids (BCAA). Catalyzes an alkyl-migration followed by a ketol-acid reduction of (S)-2-acetolactate (S2AL) to yield (R)-2,3-dihydroxy-isovalerate. In the isomerase reaction, S2AL is rearranged via a Mg-dependent methyl migration to produce 3-hydroxy-3-methyl-2-ketobutyrate (HMKB). In the reductase reaction, this 2-ketoacid undergoes a metal-dependent reduction by NADPH to yield (R)-2,3-dihydroxy-isovalerate.</text>
</comment>
<comment type="catalytic activity">
    <reaction evidence="1">
        <text>(2R)-2,3-dihydroxy-3-methylbutanoate + NADP(+) = (2S)-2-acetolactate + NADPH + H(+)</text>
        <dbReference type="Rhea" id="RHEA:22068"/>
        <dbReference type="ChEBI" id="CHEBI:15378"/>
        <dbReference type="ChEBI" id="CHEBI:49072"/>
        <dbReference type="ChEBI" id="CHEBI:57783"/>
        <dbReference type="ChEBI" id="CHEBI:58349"/>
        <dbReference type="ChEBI" id="CHEBI:58476"/>
        <dbReference type="EC" id="1.1.1.86"/>
    </reaction>
</comment>
<comment type="catalytic activity">
    <reaction evidence="1">
        <text>(2R,3R)-2,3-dihydroxy-3-methylpentanoate + NADP(+) = (S)-2-ethyl-2-hydroxy-3-oxobutanoate + NADPH + H(+)</text>
        <dbReference type="Rhea" id="RHEA:13493"/>
        <dbReference type="ChEBI" id="CHEBI:15378"/>
        <dbReference type="ChEBI" id="CHEBI:49256"/>
        <dbReference type="ChEBI" id="CHEBI:49258"/>
        <dbReference type="ChEBI" id="CHEBI:57783"/>
        <dbReference type="ChEBI" id="CHEBI:58349"/>
        <dbReference type="EC" id="1.1.1.86"/>
    </reaction>
</comment>
<comment type="cofactor">
    <cofactor evidence="1">
        <name>Mg(2+)</name>
        <dbReference type="ChEBI" id="CHEBI:18420"/>
    </cofactor>
    <text evidence="1">Binds 2 magnesium ions per subunit.</text>
</comment>
<comment type="pathway">
    <text evidence="1">Amino-acid biosynthesis; L-isoleucine biosynthesis; L-isoleucine from 2-oxobutanoate: step 2/4.</text>
</comment>
<comment type="pathway">
    <text evidence="1">Amino-acid biosynthesis; L-valine biosynthesis; L-valine from pyruvate: step 2/4.</text>
</comment>
<comment type="similarity">
    <text evidence="1">Belongs to the ketol-acid reductoisomerase family.</text>
</comment>
<proteinExistence type="inferred from homology"/>
<reference key="1">
    <citation type="journal article" date="2005" name="Arch. Microbiol.">
        <title>The genome sequence of an anaerobic aromatic-degrading denitrifying bacterium, strain EbN1.</title>
        <authorList>
            <person name="Rabus R."/>
            <person name="Kube M."/>
            <person name="Heider J."/>
            <person name="Beck A."/>
            <person name="Heitmann K."/>
            <person name="Widdel F."/>
            <person name="Reinhardt R."/>
        </authorList>
    </citation>
    <scope>NUCLEOTIDE SEQUENCE [LARGE SCALE GENOMIC DNA]</scope>
    <source>
        <strain>DSM 19018 / LMG 30748 / EbN1</strain>
    </source>
</reference>
<gene>
    <name evidence="1" type="primary">ilvC</name>
    <name type="ordered locus">AZOSEA40450</name>
    <name type="ORF">ebA7134</name>
</gene>
<protein>
    <recommendedName>
        <fullName evidence="1">Ketol-acid reductoisomerase (NADP(+))</fullName>
        <shortName evidence="1">KARI</shortName>
        <ecNumber evidence="1">1.1.1.86</ecNumber>
    </recommendedName>
    <alternativeName>
        <fullName evidence="1">Acetohydroxy-acid isomeroreductase</fullName>
        <shortName evidence="1">AHIR</shortName>
    </alternativeName>
    <alternativeName>
        <fullName evidence="1">Alpha-keto-beta-hydroxylacyl reductoisomerase</fullName>
    </alternativeName>
    <alternativeName>
        <fullName evidence="1">Ketol-acid reductoisomerase type 1</fullName>
    </alternativeName>
    <alternativeName>
        <fullName evidence="1">Ketol-acid reductoisomerase type I</fullName>
    </alternativeName>
</protein>
<dbReference type="EC" id="1.1.1.86" evidence="1"/>
<dbReference type="EMBL" id="CR555306">
    <property type="protein sequence ID" value="CAI10170.1"/>
    <property type="molecule type" value="Genomic_DNA"/>
</dbReference>
<dbReference type="RefSeq" id="WP_011239815.1">
    <property type="nucleotide sequence ID" value="NC_006513.1"/>
</dbReference>
<dbReference type="SMR" id="Q5NXP4"/>
<dbReference type="STRING" id="76114.ebA7134"/>
<dbReference type="KEGG" id="eba:ebA7134"/>
<dbReference type="eggNOG" id="COG0059">
    <property type="taxonomic scope" value="Bacteria"/>
</dbReference>
<dbReference type="HOGENOM" id="CLU_033821_0_1_4"/>
<dbReference type="OrthoDB" id="9804088at2"/>
<dbReference type="UniPathway" id="UPA00047">
    <property type="reaction ID" value="UER00056"/>
</dbReference>
<dbReference type="UniPathway" id="UPA00049">
    <property type="reaction ID" value="UER00060"/>
</dbReference>
<dbReference type="Proteomes" id="UP000006552">
    <property type="component" value="Chromosome"/>
</dbReference>
<dbReference type="GO" id="GO:0005829">
    <property type="term" value="C:cytosol"/>
    <property type="evidence" value="ECO:0007669"/>
    <property type="project" value="TreeGrafter"/>
</dbReference>
<dbReference type="GO" id="GO:0004455">
    <property type="term" value="F:ketol-acid reductoisomerase activity"/>
    <property type="evidence" value="ECO:0007669"/>
    <property type="project" value="UniProtKB-UniRule"/>
</dbReference>
<dbReference type="GO" id="GO:0000287">
    <property type="term" value="F:magnesium ion binding"/>
    <property type="evidence" value="ECO:0007669"/>
    <property type="project" value="UniProtKB-UniRule"/>
</dbReference>
<dbReference type="GO" id="GO:0050661">
    <property type="term" value="F:NADP binding"/>
    <property type="evidence" value="ECO:0007669"/>
    <property type="project" value="InterPro"/>
</dbReference>
<dbReference type="GO" id="GO:0009097">
    <property type="term" value="P:isoleucine biosynthetic process"/>
    <property type="evidence" value="ECO:0007669"/>
    <property type="project" value="UniProtKB-UniRule"/>
</dbReference>
<dbReference type="GO" id="GO:0009099">
    <property type="term" value="P:L-valine biosynthetic process"/>
    <property type="evidence" value="ECO:0007669"/>
    <property type="project" value="UniProtKB-UniRule"/>
</dbReference>
<dbReference type="FunFam" id="3.40.50.720:FF:000023">
    <property type="entry name" value="Ketol-acid reductoisomerase (NADP(+))"/>
    <property type="match status" value="1"/>
</dbReference>
<dbReference type="Gene3D" id="6.10.240.10">
    <property type="match status" value="1"/>
</dbReference>
<dbReference type="Gene3D" id="3.40.50.720">
    <property type="entry name" value="NAD(P)-binding Rossmann-like Domain"/>
    <property type="match status" value="1"/>
</dbReference>
<dbReference type="HAMAP" id="MF_00435">
    <property type="entry name" value="IlvC"/>
    <property type="match status" value="1"/>
</dbReference>
<dbReference type="InterPro" id="IPR008927">
    <property type="entry name" value="6-PGluconate_DH-like_C_sf"/>
</dbReference>
<dbReference type="InterPro" id="IPR013023">
    <property type="entry name" value="KARI"/>
</dbReference>
<dbReference type="InterPro" id="IPR000506">
    <property type="entry name" value="KARI_C"/>
</dbReference>
<dbReference type="InterPro" id="IPR013116">
    <property type="entry name" value="KARI_N"/>
</dbReference>
<dbReference type="InterPro" id="IPR014359">
    <property type="entry name" value="KARI_prok"/>
</dbReference>
<dbReference type="InterPro" id="IPR036291">
    <property type="entry name" value="NAD(P)-bd_dom_sf"/>
</dbReference>
<dbReference type="NCBIfam" id="TIGR00465">
    <property type="entry name" value="ilvC"/>
    <property type="match status" value="1"/>
</dbReference>
<dbReference type="NCBIfam" id="NF004017">
    <property type="entry name" value="PRK05479.1"/>
    <property type="match status" value="1"/>
</dbReference>
<dbReference type="NCBIfam" id="NF009940">
    <property type="entry name" value="PRK13403.1"/>
    <property type="match status" value="1"/>
</dbReference>
<dbReference type="PANTHER" id="PTHR21371">
    <property type="entry name" value="KETOL-ACID REDUCTOISOMERASE, MITOCHONDRIAL"/>
    <property type="match status" value="1"/>
</dbReference>
<dbReference type="PANTHER" id="PTHR21371:SF1">
    <property type="entry name" value="KETOL-ACID REDUCTOISOMERASE, MITOCHONDRIAL"/>
    <property type="match status" value="1"/>
</dbReference>
<dbReference type="Pfam" id="PF01450">
    <property type="entry name" value="KARI_C"/>
    <property type="match status" value="1"/>
</dbReference>
<dbReference type="Pfam" id="PF07991">
    <property type="entry name" value="KARI_N"/>
    <property type="match status" value="1"/>
</dbReference>
<dbReference type="PIRSF" id="PIRSF000116">
    <property type="entry name" value="IlvC_gammaproteo"/>
    <property type="match status" value="1"/>
</dbReference>
<dbReference type="SUPFAM" id="SSF48179">
    <property type="entry name" value="6-phosphogluconate dehydrogenase C-terminal domain-like"/>
    <property type="match status" value="1"/>
</dbReference>
<dbReference type="SUPFAM" id="SSF51735">
    <property type="entry name" value="NAD(P)-binding Rossmann-fold domains"/>
    <property type="match status" value="1"/>
</dbReference>
<dbReference type="PROSITE" id="PS51851">
    <property type="entry name" value="KARI_C"/>
    <property type="match status" value="1"/>
</dbReference>
<dbReference type="PROSITE" id="PS51850">
    <property type="entry name" value="KARI_N"/>
    <property type="match status" value="1"/>
</dbReference>
<organism>
    <name type="scientific">Aromatoleum aromaticum (strain DSM 19018 / LMG 30748 / EbN1)</name>
    <name type="common">Azoarcus sp. (strain EbN1)</name>
    <dbReference type="NCBI Taxonomy" id="76114"/>
    <lineage>
        <taxon>Bacteria</taxon>
        <taxon>Pseudomonadati</taxon>
        <taxon>Pseudomonadota</taxon>
        <taxon>Betaproteobacteria</taxon>
        <taxon>Rhodocyclales</taxon>
        <taxon>Rhodocyclaceae</taxon>
        <taxon>Aromatoleum</taxon>
    </lineage>
</organism>
<sequence>MKVYYDKDADLSLIKGKQITIVGYGSQGHAHAQNLKDSGCKVTVGLRKSGASWKKAEAAGLDVREVAEAVSNADIVMILLPDENIPGVYYNDVEPNIKQGATLAFAHGFNVHYNQVVPRDDLDVIMVAPKGPGHTVRSEYLKGGGVPSLIAVHQDRSGKAKDIALSYAAANGGTKGGVIETNFREETETDLFGEQAVLCGGAVELVKMGFETLTEAGYAPEMAYFECLHELKLIVDLMYEGGIANMNYSISNNAEYGEYVTGPEVINEQSREAMRAALKRIQTGEYAKMFIQEGRTNYPSMTARRRLNAAHPIEQVGGQLRDMMPWIKKNKLVDQSKN</sequence>
<accession>Q5NXP4</accession>
<feature type="chain" id="PRO_0000226154" description="Ketol-acid reductoisomerase (NADP(+))">
    <location>
        <begin position="1"/>
        <end position="338"/>
    </location>
</feature>
<feature type="domain" description="KARI N-terminal Rossmann" evidence="2">
    <location>
        <begin position="1"/>
        <end position="181"/>
    </location>
</feature>
<feature type="domain" description="KARI C-terminal knotted" evidence="3">
    <location>
        <begin position="182"/>
        <end position="327"/>
    </location>
</feature>
<feature type="active site" evidence="1">
    <location>
        <position position="107"/>
    </location>
</feature>
<feature type="binding site" evidence="1">
    <location>
        <begin position="24"/>
        <end position="27"/>
    </location>
    <ligand>
        <name>NADP(+)</name>
        <dbReference type="ChEBI" id="CHEBI:58349"/>
    </ligand>
</feature>
<feature type="binding site" evidence="1">
    <location>
        <position position="47"/>
    </location>
    <ligand>
        <name>NADP(+)</name>
        <dbReference type="ChEBI" id="CHEBI:58349"/>
    </ligand>
</feature>
<feature type="binding site" evidence="1">
    <location>
        <position position="52"/>
    </location>
    <ligand>
        <name>NADP(+)</name>
        <dbReference type="ChEBI" id="CHEBI:58349"/>
    </ligand>
</feature>
<feature type="binding site" evidence="1">
    <location>
        <position position="133"/>
    </location>
    <ligand>
        <name>NADP(+)</name>
        <dbReference type="ChEBI" id="CHEBI:58349"/>
    </ligand>
</feature>
<feature type="binding site" evidence="1">
    <location>
        <position position="190"/>
    </location>
    <ligand>
        <name>Mg(2+)</name>
        <dbReference type="ChEBI" id="CHEBI:18420"/>
        <label>1</label>
    </ligand>
</feature>
<feature type="binding site" evidence="1">
    <location>
        <position position="190"/>
    </location>
    <ligand>
        <name>Mg(2+)</name>
        <dbReference type="ChEBI" id="CHEBI:18420"/>
        <label>2</label>
    </ligand>
</feature>
<feature type="binding site" evidence="1">
    <location>
        <position position="194"/>
    </location>
    <ligand>
        <name>Mg(2+)</name>
        <dbReference type="ChEBI" id="CHEBI:18420"/>
        <label>1</label>
    </ligand>
</feature>
<feature type="binding site" evidence="1">
    <location>
        <position position="226"/>
    </location>
    <ligand>
        <name>Mg(2+)</name>
        <dbReference type="ChEBI" id="CHEBI:18420"/>
        <label>2</label>
    </ligand>
</feature>
<feature type="binding site" evidence="1">
    <location>
        <position position="230"/>
    </location>
    <ligand>
        <name>Mg(2+)</name>
        <dbReference type="ChEBI" id="CHEBI:18420"/>
        <label>2</label>
    </ligand>
</feature>
<feature type="binding site" evidence="1">
    <location>
        <position position="251"/>
    </location>
    <ligand>
        <name>substrate</name>
    </ligand>
</feature>